<comment type="function">
    <text evidence="1">CRISPR (clustered regularly interspaced short palindromic repeat), is an adaptive immune system that provides protection against mobile genetic elements (viruses, transposable elements and conjugative plasmids). CRISPR clusters contain spacers, sequences complementary to antecedent mobile elements, and target invading nucleic acids. CRISPR clusters are transcribed and processed into CRISPR RNA (crRNA). Acts as a dsDNA endonuclease. Involved in the integration of spacer DNA into the CRISPR cassette.</text>
</comment>
<comment type="cofactor">
    <cofactor evidence="1">
        <name>Mg(2+)</name>
        <dbReference type="ChEBI" id="CHEBI:18420"/>
    </cofactor>
    <cofactor evidence="1">
        <name>Mn(2+)</name>
        <dbReference type="ChEBI" id="CHEBI:29035"/>
    </cofactor>
</comment>
<comment type="subunit">
    <text evidence="1">Homodimer, forms a heterotetramer with a Cas2 homodimer.</text>
</comment>
<comment type="similarity">
    <text evidence="1">Belongs to the CRISPR-associated endonuclease Cas1 family.</text>
</comment>
<comment type="sequence caution" evidence="2">
    <conflict type="erroneous initiation">
        <sequence resource="EMBL-CDS" id="BAK47964"/>
    </conflict>
    <text>Truncated N-terminus.</text>
</comment>
<evidence type="ECO:0000255" key="1">
    <source>
        <dbReference type="HAMAP-Rule" id="MF_01470"/>
    </source>
</evidence>
<evidence type="ECO:0000305" key="2"/>
<keyword id="KW-0051">Antiviral defense</keyword>
<keyword id="KW-0238">DNA-binding</keyword>
<keyword id="KW-0255">Endonuclease</keyword>
<keyword id="KW-0378">Hydrolase</keyword>
<keyword id="KW-0460">Magnesium</keyword>
<keyword id="KW-0464">Manganese</keyword>
<keyword id="KW-0479">Metal-binding</keyword>
<keyword id="KW-0540">Nuclease</keyword>
<keyword id="KW-1185">Reference proteome</keyword>
<sequence length="301" mass="33562">MPRISDRVTYIYVEHSKINRVDGSITVAESRGIVRIPASMIGILLLGPGTDISHRAMELLGDSGTSVAWVGEQGVRNYAHGRSLSHTSRFLELQAKLVSNTRSRLQVARKMYQMRFPEEDVSSLTMQQLRAKEGARIRKIYRKMSAEYGVDWNGRTYDPDDFEGGDPVNQALSAANVALYGLAYSAIAAMGLATGLGFVHTGHDLSFVYDIADLYKADITVPVAFEIASEYEEGDNVGKISRQKVRDKFIGGKLFATIVRDIQLLFGIKEEEQLNVEPLSLWDNREGNIKYGINYSNENED</sequence>
<reference key="1">
    <citation type="journal article" date="2011" name="J. Bacteriol.">
        <title>Complete genomic sequence of the O-desmethylangolensin-producing bacterium Clostridium rRNA cluster XIVa strain SY8519, isolated from adult human intestine.</title>
        <authorList>
            <person name="Yokoyama S."/>
            <person name="Oshima K."/>
            <person name="Nomura I."/>
            <person name="Hattori M."/>
            <person name="Suzuki T."/>
        </authorList>
    </citation>
    <scope>NUCLEOTIDE SEQUENCE [LARGE SCALE GENOMIC DNA]</scope>
    <source>
        <strain>SY8519</strain>
    </source>
</reference>
<protein>
    <recommendedName>
        <fullName evidence="1">CRISPR-associated endonuclease Cas1</fullName>
        <ecNumber evidence="1">3.1.-.-</ecNumber>
    </recommendedName>
</protein>
<proteinExistence type="inferred from homology"/>
<organism>
    <name type="scientific">Clostridium sp. (strain SY8519)</name>
    <dbReference type="NCBI Taxonomy" id="1042156"/>
    <lineage>
        <taxon>Bacteria</taxon>
        <taxon>Bacillati</taxon>
        <taxon>Bacillota</taxon>
        <taxon>Clostridia</taxon>
        <taxon>Eubacteriales</taxon>
        <taxon>Clostridiaceae</taxon>
        <taxon>Clostridium</taxon>
    </lineage>
</organism>
<name>CAS1_CLOSS</name>
<dbReference type="EC" id="3.1.-.-" evidence="1"/>
<dbReference type="EMBL" id="AP012212">
    <property type="protein sequence ID" value="BAK47964.1"/>
    <property type="status" value="ALT_INIT"/>
    <property type="molecule type" value="Genomic_DNA"/>
</dbReference>
<dbReference type="SMR" id="F7V5D5"/>
<dbReference type="STRING" id="1042156.CXIVA_19970"/>
<dbReference type="KEGG" id="cls:CXIVA_19970"/>
<dbReference type="eggNOG" id="COG1518">
    <property type="taxonomic scope" value="Bacteria"/>
</dbReference>
<dbReference type="HOGENOM" id="CLU_1624342_0_0_9"/>
<dbReference type="OrthoDB" id="9777847at2"/>
<dbReference type="Proteomes" id="UP000008937">
    <property type="component" value="Chromosome"/>
</dbReference>
<dbReference type="GO" id="GO:0003677">
    <property type="term" value="F:DNA binding"/>
    <property type="evidence" value="ECO:0007669"/>
    <property type="project" value="UniProtKB-KW"/>
</dbReference>
<dbReference type="GO" id="GO:0004520">
    <property type="term" value="F:DNA endonuclease activity"/>
    <property type="evidence" value="ECO:0007669"/>
    <property type="project" value="InterPro"/>
</dbReference>
<dbReference type="GO" id="GO:0046872">
    <property type="term" value="F:metal ion binding"/>
    <property type="evidence" value="ECO:0007669"/>
    <property type="project" value="UniProtKB-UniRule"/>
</dbReference>
<dbReference type="GO" id="GO:0051607">
    <property type="term" value="P:defense response to virus"/>
    <property type="evidence" value="ECO:0007669"/>
    <property type="project" value="UniProtKB-UniRule"/>
</dbReference>
<dbReference type="GO" id="GO:0043571">
    <property type="term" value="P:maintenance of CRISPR repeat elements"/>
    <property type="evidence" value="ECO:0007669"/>
    <property type="project" value="UniProtKB-UniRule"/>
</dbReference>
<dbReference type="CDD" id="cd09719">
    <property type="entry name" value="Cas1_I-E"/>
    <property type="match status" value="1"/>
</dbReference>
<dbReference type="Gene3D" id="1.20.120.920">
    <property type="entry name" value="CRISPR-associated endonuclease Cas1, C-terminal domain"/>
    <property type="match status" value="1"/>
</dbReference>
<dbReference type="Gene3D" id="3.100.10.20">
    <property type="entry name" value="CRISPR-associated endonuclease Cas1, N-terminal domain"/>
    <property type="match status" value="1"/>
</dbReference>
<dbReference type="HAMAP" id="MF_01470">
    <property type="entry name" value="Cas1"/>
    <property type="match status" value="1"/>
</dbReference>
<dbReference type="InterPro" id="IPR050646">
    <property type="entry name" value="Cas1"/>
</dbReference>
<dbReference type="InterPro" id="IPR033641">
    <property type="entry name" value="Cas1_I-E"/>
</dbReference>
<dbReference type="InterPro" id="IPR002729">
    <property type="entry name" value="CRISPR-assoc_Cas1"/>
</dbReference>
<dbReference type="InterPro" id="IPR042206">
    <property type="entry name" value="CRISPR-assoc_Cas1_C"/>
</dbReference>
<dbReference type="InterPro" id="IPR019851">
    <property type="entry name" value="CRISPR-assoc_Cas1_ECOLI"/>
</dbReference>
<dbReference type="InterPro" id="IPR042211">
    <property type="entry name" value="CRISPR-assoc_Cas1_N"/>
</dbReference>
<dbReference type="NCBIfam" id="TIGR00287">
    <property type="entry name" value="cas1"/>
    <property type="match status" value="1"/>
</dbReference>
<dbReference type="NCBIfam" id="TIGR03638">
    <property type="entry name" value="cas1_ECOLI"/>
    <property type="match status" value="1"/>
</dbReference>
<dbReference type="PANTHER" id="PTHR34353:SF3">
    <property type="entry name" value="CRISPR-ASSOCIATED ENDONUCLEASE CAS1"/>
    <property type="match status" value="1"/>
</dbReference>
<dbReference type="PANTHER" id="PTHR34353">
    <property type="entry name" value="CRISPR-ASSOCIATED ENDONUCLEASE CAS1 1"/>
    <property type="match status" value="1"/>
</dbReference>
<dbReference type="Pfam" id="PF01867">
    <property type="entry name" value="Cas_Cas1"/>
    <property type="match status" value="2"/>
</dbReference>
<gene>
    <name evidence="1" type="primary">cas1</name>
    <name type="ordered locus">CXIVA_19970</name>
</gene>
<feature type="chain" id="PRO_0000417076" description="CRISPR-associated endonuclease Cas1">
    <location>
        <begin position="1"/>
        <end position="301"/>
    </location>
</feature>
<feature type="binding site" evidence="1">
    <location>
        <position position="133"/>
    </location>
    <ligand>
        <name>Mn(2+)</name>
        <dbReference type="ChEBI" id="CHEBI:29035"/>
    </ligand>
</feature>
<feature type="binding site" evidence="1">
    <location>
        <position position="200"/>
    </location>
    <ligand>
        <name>Mn(2+)</name>
        <dbReference type="ChEBI" id="CHEBI:29035"/>
    </ligand>
</feature>
<feature type="binding site" evidence="1">
    <location>
        <position position="213"/>
    </location>
    <ligand>
        <name>Mn(2+)</name>
        <dbReference type="ChEBI" id="CHEBI:29035"/>
    </ligand>
</feature>
<accession>F7V5D5</accession>